<keyword id="KW-0007">Acetylation</keyword>
<keyword id="KW-0067">ATP-binding</keyword>
<keyword id="KW-0119">Carbohydrate metabolism</keyword>
<keyword id="KW-0418">Kinase</keyword>
<keyword id="KW-0511">Multifunctional enzyme</keyword>
<keyword id="KW-0547">Nucleotide-binding</keyword>
<keyword id="KW-0548">Nucleotidyltransferase</keyword>
<keyword id="KW-0808">Transferase</keyword>
<organism>
    <name type="scientific">Shigella boydii serotype 4 (strain Sb227)</name>
    <dbReference type="NCBI Taxonomy" id="300268"/>
    <lineage>
        <taxon>Bacteria</taxon>
        <taxon>Pseudomonadati</taxon>
        <taxon>Pseudomonadota</taxon>
        <taxon>Gammaproteobacteria</taxon>
        <taxon>Enterobacterales</taxon>
        <taxon>Enterobacteriaceae</taxon>
        <taxon>Shigella</taxon>
    </lineage>
</organism>
<evidence type="ECO:0000255" key="1">
    <source>
        <dbReference type="HAMAP-Rule" id="MF_01603"/>
    </source>
</evidence>
<proteinExistence type="inferred from homology"/>
<accession>Q31WY3</accession>
<name>HLDE_SHIBS</name>
<gene>
    <name evidence="1" type="primary">hldE</name>
    <name type="ordered locus">SBO_2908</name>
</gene>
<feature type="chain" id="PRO_0000255782" description="Bifunctional protein HldE">
    <location>
        <begin position="1"/>
        <end position="477"/>
    </location>
</feature>
<feature type="region of interest" description="Ribokinase">
    <location>
        <begin position="1"/>
        <end position="318"/>
    </location>
</feature>
<feature type="region of interest" description="Cytidylyltransferase">
    <location>
        <begin position="344"/>
        <end position="477"/>
    </location>
</feature>
<feature type="active site" evidence="1">
    <location>
        <position position="264"/>
    </location>
</feature>
<feature type="binding site" evidence="1">
    <location>
        <begin position="195"/>
        <end position="198"/>
    </location>
    <ligand>
        <name>ATP</name>
        <dbReference type="ChEBI" id="CHEBI:30616"/>
    </ligand>
</feature>
<feature type="modified residue" description="N6-acetyllysine" evidence="1">
    <location>
        <position position="179"/>
    </location>
</feature>
<dbReference type="EC" id="2.7.1.167" evidence="1"/>
<dbReference type="EC" id="2.7.7.70" evidence="1"/>
<dbReference type="EMBL" id="CP000036">
    <property type="protein sequence ID" value="ABB67425.1"/>
    <property type="molecule type" value="Genomic_DNA"/>
</dbReference>
<dbReference type="RefSeq" id="WP_000869227.1">
    <property type="nucleotide sequence ID" value="NC_007613.1"/>
</dbReference>
<dbReference type="SMR" id="Q31WY3"/>
<dbReference type="KEGG" id="sbo:SBO_2908"/>
<dbReference type="HOGENOM" id="CLU_021150_2_1_6"/>
<dbReference type="UniPathway" id="UPA00356">
    <property type="reaction ID" value="UER00437"/>
</dbReference>
<dbReference type="UniPathway" id="UPA00356">
    <property type="reaction ID" value="UER00439"/>
</dbReference>
<dbReference type="Proteomes" id="UP000007067">
    <property type="component" value="Chromosome"/>
</dbReference>
<dbReference type="GO" id="GO:0005829">
    <property type="term" value="C:cytosol"/>
    <property type="evidence" value="ECO:0007669"/>
    <property type="project" value="TreeGrafter"/>
</dbReference>
<dbReference type="GO" id="GO:0005524">
    <property type="term" value="F:ATP binding"/>
    <property type="evidence" value="ECO:0007669"/>
    <property type="project" value="UniProtKB-UniRule"/>
</dbReference>
<dbReference type="GO" id="GO:0033785">
    <property type="term" value="F:heptose 7-phosphate kinase activity"/>
    <property type="evidence" value="ECO:0007669"/>
    <property type="project" value="UniProtKB-UniRule"/>
</dbReference>
<dbReference type="GO" id="GO:0033786">
    <property type="term" value="F:heptose-1-phosphate adenylyltransferase activity"/>
    <property type="evidence" value="ECO:0007669"/>
    <property type="project" value="UniProtKB-UniRule"/>
</dbReference>
<dbReference type="GO" id="GO:0016773">
    <property type="term" value="F:phosphotransferase activity, alcohol group as acceptor"/>
    <property type="evidence" value="ECO:0007669"/>
    <property type="project" value="InterPro"/>
</dbReference>
<dbReference type="GO" id="GO:0097171">
    <property type="term" value="P:ADP-L-glycero-beta-D-manno-heptose biosynthetic process"/>
    <property type="evidence" value="ECO:0007669"/>
    <property type="project" value="UniProtKB-UniPathway"/>
</dbReference>
<dbReference type="CDD" id="cd01172">
    <property type="entry name" value="RfaE_like"/>
    <property type="match status" value="1"/>
</dbReference>
<dbReference type="FunFam" id="3.40.1190.20:FF:000002">
    <property type="entry name" value="Bifunctional protein HldE"/>
    <property type="match status" value="1"/>
</dbReference>
<dbReference type="FunFam" id="3.40.50.620:FF:000028">
    <property type="entry name" value="Bifunctional protein HldE"/>
    <property type="match status" value="1"/>
</dbReference>
<dbReference type="Gene3D" id="3.40.1190.20">
    <property type="match status" value="1"/>
</dbReference>
<dbReference type="Gene3D" id="3.40.50.620">
    <property type="entry name" value="HUPs"/>
    <property type="match status" value="1"/>
</dbReference>
<dbReference type="HAMAP" id="MF_01603">
    <property type="entry name" value="HldE"/>
    <property type="match status" value="1"/>
</dbReference>
<dbReference type="InterPro" id="IPR023030">
    <property type="entry name" value="Bifunc_HldE"/>
</dbReference>
<dbReference type="InterPro" id="IPR002173">
    <property type="entry name" value="Carboh/pur_kinase_PfkB_CS"/>
</dbReference>
<dbReference type="InterPro" id="IPR004821">
    <property type="entry name" value="Cyt_trans-like"/>
</dbReference>
<dbReference type="InterPro" id="IPR011611">
    <property type="entry name" value="PfkB_dom"/>
</dbReference>
<dbReference type="InterPro" id="IPR011913">
    <property type="entry name" value="RfaE_dom_I"/>
</dbReference>
<dbReference type="InterPro" id="IPR011914">
    <property type="entry name" value="RfaE_dom_II"/>
</dbReference>
<dbReference type="InterPro" id="IPR029056">
    <property type="entry name" value="Ribokinase-like"/>
</dbReference>
<dbReference type="InterPro" id="IPR014729">
    <property type="entry name" value="Rossmann-like_a/b/a_fold"/>
</dbReference>
<dbReference type="NCBIfam" id="TIGR00125">
    <property type="entry name" value="cyt_tran_rel"/>
    <property type="match status" value="1"/>
</dbReference>
<dbReference type="NCBIfam" id="NF008454">
    <property type="entry name" value="PRK11316.1"/>
    <property type="match status" value="1"/>
</dbReference>
<dbReference type="NCBIfam" id="TIGR02198">
    <property type="entry name" value="rfaE_dom_I"/>
    <property type="match status" value="1"/>
</dbReference>
<dbReference type="NCBIfam" id="TIGR02199">
    <property type="entry name" value="rfaE_dom_II"/>
    <property type="match status" value="1"/>
</dbReference>
<dbReference type="PANTHER" id="PTHR46969">
    <property type="entry name" value="BIFUNCTIONAL PROTEIN HLDE"/>
    <property type="match status" value="1"/>
</dbReference>
<dbReference type="PANTHER" id="PTHR46969:SF1">
    <property type="entry name" value="BIFUNCTIONAL PROTEIN HLDE"/>
    <property type="match status" value="1"/>
</dbReference>
<dbReference type="Pfam" id="PF01467">
    <property type="entry name" value="CTP_transf_like"/>
    <property type="match status" value="1"/>
</dbReference>
<dbReference type="Pfam" id="PF00294">
    <property type="entry name" value="PfkB"/>
    <property type="match status" value="1"/>
</dbReference>
<dbReference type="SUPFAM" id="SSF52374">
    <property type="entry name" value="Nucleotidylyl transferase"/>
    <property type="match status" value="1"/>
</dbReference>
<dbReference type="SUPFAM" id="SSF53613">
    <property type="entry name" value="Ribokinase-like"/>
    <property type="match status" value="1"/>
</dbReference>
<dbReference type="PROSITE" id="PS00583">
    <property type="entry name" value="PFKB_KINASES_1"/>
    <property type="match status" value="1"/>
</dbReference>
<sequence length="477" mass="51041">MKVTLSEFERAGVMVVGDVMLDRYWYGPTSRISPEAPVPVVKVNTIEERPGGAANVAMNIASLGANARLVGLTGIDDAARALSKSLADVNVKCDFVSVPTHPTITKLRVLSRNQQLIRLDFEEGFEGVDPQPLHERINQALSSIGALVLSDYAKGALASVQQMIQLARKAGVPVLIDPKGTDFERYRGATLLTPNLSEFEAVVGKCKTEEEIVERGMKLIADYELSALLVTRSEQGMSLLQPGKAPLHMPTQAQEVYDVTGAGDTVIGVLAATLAAGNSLEEACFFANAAAGVVVGKLGTSTVSPIELENAVRGRADTGFGVMTEEELKLAVAAARKRGEKVVMTNGVFDILHAGHVSYLANARKLGDRLIVAVNSDASTKRLKGDSRPVNPLEQRMIVLGALEAVDWVVSFEEDTPQRLIAGILPDLLVKGGDYKPEEIAGSKEVWANGGEVLVLNFEDGCSTTNIIKKIQQDKKG</sequence>
<protein>
    <recommendedName>
        <fullName evidence="1">Bifunctional protein HldE</fullName>
    </recommendedName>
    <domain>
        <recommendedName>
            <fullName evidence="1">D-beta-D-heptose 7-phosphate kinase</fullName>
            <ecNumber evidence="1">2.7.1.167</ecNumber>
        </recommendedName>
        <alternativeName>
            <fullName evidence="1">D-beta-D-heptose 7-phosphotransferase</fullName>
        </alternativeName>
        <alternativeName>
            <fullName evidence="1">D-glycero-beta-D-manno-heptose-7-phosphate kinase</fullName>
        </alternativeName>
    </domain>
    <domain>
        <recommendedName>
            <fullName evidence="1">D-beta-D-heptose 1-phosphate adenylyltransferase</fullName>
            <ecNumber evidence="1">2.7.7.70</ecNumber>
        </recommendedName>
        <alternativeName>
            <fullName evidence="1">D-glycero-beta-D-manno-heptose 1-phosphate adenylyltransferase</fullName>
        </alternativeName>
    </domain>
</protein>
<reference key="1">
    <citation type="journal article" date="2005" name="Nucleic Acids Res.">
        <title>Genome dynamics and diversity of Shigella species, the etiologic agents of bacillary dysentery.</title>
        <authorList>
            <person name="Yang F."/>
            <person name="Yang J."/>
            <person name="Zhang X."/>
            <person name="Chen L."/>
            <person name="Jiang Y."/>
            <person name="Yan Y."/>
            <person name="Tang X."/>
            <person name="Wang J."/>
            <person name="Xiong Z."/>
            <person name="Dong J."/>
            <person name="Xue Y."/>
            <person name="Zhu Y."/>
            <person name="Xu X."/>
            <person name="Sun L."/>
            <person name="Chen S."/>
            <person name="Nie H."/>
            <person name="Peng J."/>
            <person name="Xu J."/>
            <person name="Wang Y."/>
            <person name="Yuan Z."/>
            <person name="Wen Y."/>
            <person name="Yao Z."/>
            <person name="Shen Y."/>
            <person name="Qiang B."/>
            <person name="Hou Y."/>
            <person name="Yu J."/>
            <person name="Jin Q."/>
        </authorList>
    </citation>
    <scope>NUCLEOTIDE SEQUENCE [LARGE SCALE GENOMIC DNA]</scope>
    <source>
        <strain>Sb227</strain>
    </source>
</reference>
<comment type="function">
    <text evidence="1">Catalyzes the phosphorylation of D-glycero-D-manno-heptose 7-phosphate at the C-1 position to selectively form D-glycero-beta-D-manno-heptose-1,7-bisphosphate.</text>
</comment>
<comment type="function">
    <text evidence="1">Catalyzes the ADP transfer from ATP to D-glycero-beta-D-manno-heptose 1-phosphate, yielding ADP-D-glycero-beta-D-manno-heptose.</text>
</comment>
<comment type="catalytic activity">
    <reaction evidence="1">
        <text>D-glycero-beta-D-manno-heptose 7-phosphate + ATP = D-glycero-beta-D-manno-heptose 1,7-bisphosphate + ADP + H(+)</text>
        <dbReference type="Rhea" id="RHEA:27473"/>
        <dbReference type="ChEBI" id="CHEBI:15378"/>
        <dbReference type="ChEBI" id="CHEBI:30616"/>
        <dbReference type="ChEBI" id="CHEBI:60204"/>
        <dbReference type="ChEBI" id="CHEBI:60208"/>
        <dbReference type="ChEBI" id="CHEBI:456216"/>
        <dbReference type="EC" id="2.7.1.167"/>
    </reaction>
</comment>
<comment type="catalytic activity">
    <reaction evidence="1">
        <text>D-glycero-beta-D-manno-heptose 1-phosphate + ATP + H(+) = ADP-D-glycero-beta-D-manno-heptose + diphosphate</text>
        <dbReference type="Rhea" id="RHEA:27465"/>
        <dbReference type="ChEBI" id="CHEBI:15378"/>
        <dbReference type="ChEBI" id="CHEBI:30616"/>
        <dbReference type="ChEBI" id="CHEBI:33019"/>
        <dbReference type="ChEBI" id="CHEBI:59967"/>
        <dbReference type="ChEBI" id="CHEBI:61593"/>
        <dbReference type="EC" id="2.7.7.70"/>
    </reaction>
</comment>
<comment type="pathway">
    <text evidence="1">Nucleotide-sugar biosynthesis; ADP-L-glycero-beta-D-manno-heptose biosynthesis; ADP-L-glycero-beta-D-manno-heptose from D-glycero-beta-D-manno-heptose 7-phosphate: step 1/4.</text>
</comment>
<comment type="pathway">
    <text evidence="1">Nucleotide-sugar biosynthesis; ADP-L-glycero-beta-D-manno-heptose biosynthesis; ADP-L-glycero-beta-D-manno-heptose from D-glycero-beta-D-manno-heptose 7-phosphate: step 3/4.</text>
</comment>
<comment type="subunit">
    <text evidence="1">Homodimer.</text>
</comment>
<comment type="similarity">
    <text evidence="1">In the N-terminal section; belongs to the carbohydrate kinase PfkB family.</text>
</comment>
<comment type="similarity">
    <text evidence="1">In the C-terminal section; belongs to the cytidylyltransferase family.</text>
</comment>